<keyword id="KW-0210">Decarboxylase</keyword>
<keyword id="KW-0456">Lyase</keyword>
<keyword id="KW-0663">Pyridoxal phosphate</keyword>
<keyword id="KW-1185">Reference proteome</keyword>
<name>MFNA_THEGJ</name>
<evidence type="ECO:0000255" key="1">
    <source>
        <dbReference type="HAMAP-Rule" id="MF_01610"/>
    </source>
</evidence>
<protein>
    <recommendedName>
        <fullName evidence="1">Probable L-aspartate decarboxylase</fullName>
        <shortName evidence="1">ADC</shortName>
        <ecNumber evidence="1">4.1.1.11</ecNumber>
    </recommendedName>
</protein>
<organism>
    <name type="scientific">Thermococcus gammatolerans (strain DSM 15229 / JCM 11827 / EJ3)</name>
    <dbReference type="NCBI Taxonomy" id="593117"/>
    <lineage>
        <taxon>Archaea</taxon>
        <taxon>Methanobacteriati</taxon>
        <taxon>Methanobacteriota</taxon>
        <taxon>Thermococci</taxon>
        <taxon>Thermococcales</taxon>
        <taxon>Thermococcaceae</taxon>
        <taxon>Thermococcus</taxon>
    </lineage>
</organism>
<feature type="chain" id="PRO_1000215704" description="Probable L-aspartate decarboxylase">
    <location>
        <begin position="1"/>
        <end position="383"/>
    </location>
</feature>
<feature type="modified residue" description="N6-(pyridoxal phosphate)lysine" evidence="1">
    <location>
        <position position="231"/>
    </location>
</feature>
<reference key="1">
    <citation type="journal article" date="2007" name="Genome Biol.">
        <title>Genome analysis and genome-wide proteomics of Thermococcus gammatolerans, the most radioresistant organism known amongst the Archaea.</title>
        <authorList>
            <person name="Zivanovic Y."/>
            <person name="Armengaud J."/>
            <person name="Lagorce A."/>
            <person name="Leplat C."/>
            <person name="Guerin P."/>
            <person name="Dutertre M."/>
            <person name="Anthouard V."/>
            <person name="Forterre P."/>
            <person name="Wincker P."/>
            <person name="Confalonieri F."/>
        </authorList>
    </citation>
    <scope>NUCLEOTIDE SEQUENCE [LARGE SCALE GENOMIC DNA]</scope>
    <source>
        <strain>DSM 15229 / JCM 11827 / EJ3</strain>
    </source>
</reference>
<accession>C5A2X8</accession>
<proteinExistence type="inferred from homology"/>
<sequence>MFPERGTDEEEVLEELRRKTREDLTFDSGKILGSMCTYPHPFAVKIITEFIDRNLGDPGLHIGSRKVEEEAVEMLSNLLGLKKGYGHIVSGGTEANILAVRAFRNLAGVEKPELILPKSAHFSFIKAGEMLGVKLIWAELNEDYTVNVRDVEEKITDNTIGIVGIAGTTGLGVVDDIPALSDLALDYGLPLHVDAAFGGFVIPFAKALGYDIPDFDFRLKGVKSITIDPHKMGMVPIPAGGIIFRERKYIDAISILAPYLAGGRIWQATITGTRPGANALAVWAMIKHLGFEGYKEIVRKAMELSQWFAGELKKIPGVYLIREPVLNIVSFGTENLERVEEELKRRGWGISAHRGYIRIVMMPHVRREHLEEFLRDLEEIVRG</sequence>
<gene>
    <name evidence="1" type="primary">mfnA</name>
    <name type="ordered locus">TGAM_2137</name>
</gene>
<comment type="function">
    <text evidence="1">Catalyzes the decarboxylation of L-aspartate to produce beta-alanine.</text>
</comment>
<comment type="catalytic activity">
    <reaction evidence="1">
        <text>L-aspartate + H(+) = beta-alanine + CO2</text>
        <dbReference type="Rhea" id="RHEA:19497"/>
        <dbReference type="ChEBI" id="CHEBI:15378"/>
        <dbReference type="ChEBI" id="CHEBI:16526"/>
        <dbReference type="ChEBI" id="CHEBI:29991"/>
        <dbReference type="ChEBI" id="CHEBI:57966"/>
        <dbReference type="EC" id="4.1.1.11"/>
    </reaction>
</comment>
<comment type="cofactor">
    <cofactor evidence="1">
        <name>pyridoxal 5'-phosphate</name>
        <dbReference type="ChEBI" id="CHEBI:597326"/>
    </cofactor>
</comment>
<comment type="pathway">
    <text evidence="1">Cofactor biosynthesis; coenzyme A biosynthesis.</text>
</comment>
<comment type="similarity">
    <text evidence="1">Belongs to the group II decarboxylase family. MfnA subfamily.</text>
</comment>
<dbReference type="EC" id="4.1.1.11" evidence="1"/>
<dbReference type="EMBL" id="CP001398">
    <property type="protein sequence ID" value="ACS34639.1"/>
    <property type="molecule type" value="Genomic_DNA"/>
</dbReference>
<dbReference type="RefSeq" id="WP_015859742.1">
    <property type="nucleotide sequence ID" value="NC_012804.1"/>
</dbReference>
<dbReference type="SMR" id="C5A2X8"/>
<dbReference type="STRING" id="593117.TGAM_2137"/>
<dbReference type="PaxDb" id="593117-TGAM_2137"/>
<dbReference type="GeneID" id="7987099"/>
<dbReference type="KEGG" id="tga:TGAM_2137"/>
<dbReference type="PATRIC" id="fig|593117.10.peg.2144"/>
<dbReference type="eggNOG" id="arCOG00027">
    <property type="taxonomic scope" value="Archaea"/>
</dbReference>
<dbReference type="HOGENOM" id="CLU_028929_2_1_2"/>
<dbReference type="OrthoDB" id="56891at2157"/>
<dbReference type="UniPathway" id="UPA00241"/>
<dbReference type="Proteomes" id="UP000001488">
    <property type="component" value="Chromosome"/>
</dbReference>
<dbReference type="GO" id="GO:0004068">
    <property type="term" value="F:aspartate 1-decarboxylase activity"/>
    <property type="evidence" value="ECO:0007669"/>
    <property type="project" value="UniProtKB-UniRule"/>
</dbReference>
<dbReference type="GO" id="GO:0030170">
    <property type="term" value="F:pyridoxal phosphate binding"/>
    <property type="evidence" value="ECO:0007669"/>
    <property type="project" value="UniProtKB-UniRule"/>
</dbReference>
<dbReference type="GO" id="GO:0019752">
    <property type="term" value="P:carboxylic acid metabolic process"/>
    <property type="evidence" value="ECO:0007669"/>
    <property type="project" value="InterPro"/>
</dbReference>
<dbReference type="GO" id="GO:0015937">
    <property type="term" value="P:coenzyme A biosynthetic process"/>
    <property type="evidence" value="ECO:0007669"/>
    <property type="project" value="UniProtKB-UniRule"/>
</dbReference>
<dbReference type="FunFam" id="3.40.640.10:FF:000125">
    <property type="entry name" value="Probable L-tyrosine/L-aspartate decarboxylase"/>
    <property type="match status" value="1"/>
</dbReference>
<dbReference type="Gene3D" id="3.90.1150.10">
    <property type="entry name" value="Aspartate Aminotransferase, domain 1"/>
    <property type="match status" value="1"/>
</dbReference>
<dbReference type="Gene3D" id="3.40.640.10">
    <property type="entry name" value="Type I PLP-dependent aspartate aminotransferase-like (Major domain)"/>
    <property type="match status" value="1"/>
</dbReference>
<dbReference type="HAMAP" id="MF_01610">
    <property type="entry name" value="MfnA_decarbox"/>
    <property type="match status" value="1"/>
</dbReference>
<dbReference type="InterPro" id="IPR050477">
    <property type="entry name" value="GrpII_AminoAcid_Decarb"/>
</dbReference>
<dbReference type="InterPro" id="IPR020931">
    <property type="entry name" value="MfnA"/>
</dbReference>
<dbReference type="InterPro" id="IPR002129">
    <property type="entry name" value="PyrdxlP-dep_de-COase"/>
</dbReference>
<dbReference type="InterPro" id="IPR015424">
    <property type="entry name" value="PyrdxlP-dep_Trfase"/>
</dbReference>
<dbReference type="InterPro" id="IPR015421">
    <property type="entry name" value="PyrdxlP-dep_Trfase_major"/>
</dbReference>
<dbReference type="InterPro" id="IPR015422">
    <property type="entry name" value="PyrdxlP-dep_Trfase_small"/>
</dbReference>
<dbReference type="InterPro" id="IPR021115">
    <property type="entry name" value="Pyridoxal-P_BS"/>
</dbReference>
<dbReference type="NCBIfam" id="TIGR03812">
    <property type="entry name" value="tyr_de_CO2_Arch"/>
    <property type="match status" value="1"/>
</dbReference>
<dbReference type="PANTHER" id="PTHR42735">
    <property type="match status" value="1"/>
</dbReference>
<dbReference type="PANTHER" id="PTHR42735:SF6">
    <property type="entry name" value="SPHINGOSINE-1-PHOSPHATE LYASE 1"/>
    <property type="match status" value="1"/>
</dbReference>
<dbReference type="Pfam" id="PF00282">
    <property type="entry name" value="Pyridoxal_deC"/>
    <property type="match status" value="1"/>
</dbReference>
<dbReference type="SUPFAM" id="SSF53383">
    <property type="entry name" value="PLP-dependent transferases"/>
    <property type="match status" value="1"/>
</dbReference>
<dbReference type="PROSITE" id="PS00392">
    <property type="entry name" value="DDC_GAD_HDC_YDC"/>
    <property type="match status" value="1"/>
</dbReference>